<reference key="1">
    <citation type="journal article" date="2008" name="J. Virol.">
        <title>Full genome-based classification of rotaviruses reveals a common origin between human Wa-Like and porcine rotavirus strains and human DS-1-like and bovine rotavirus strains.</title>
        <authorList>
            <person name="Matthijnssens J."/>
            <person name="Ciarlet M."/>
            <person name="Heiman E.M."/>
            <person name="Arijs I."/>
            <person name="Delbeke T."/>
            <person name="McDonald S.M."/>
            <person name="Palombo E.A."/>
            <person name="Iturriza-Gomara M."/>
            <person name="Maes P."/>
            <person name="Patton J.T."/>
            <person name="Rahman M."/>
            <person name="Van Ranst M."/>
        </authorList>
    </citation>
    <scope>NUCLEOTIDE SEQUENCE [GENOMIC RNA]</scope>
</reference>
<comment type="function">
    <text evidence="2">RNA-directed RNA polymerase that is involved in both transcription and genome replication. Together with VP3 capping enzyme, forms an enzyme complex positioned near the channels situated at each of the five-fold vertices of the core. Following infection, the outermost layer of the virus is lost, leaving a double-layered particle (DLP) made up of the core and VP6 shell. VP1 then catalyzes the transcription of fully conservative plus-strand genomic RNAs that are extruded through the DLP's channels into the cytoplasm where they function as mRNAs for translation of viral proteins. One copy of each of the viral (+)RNAs is also recruited during core assembly, together with newly synthesized polymerase complexes and VP2. The polymerase of these novo-formed particles catalyzes the synthesis of complementary minus-strands leading to dsRNA formation. To do so, the polymerase specifically recognizes and binds 4 bases 5'-UGUG-3' in the conserved 3'-sequence of plus-strand RNA templates. VP2 presumably activates the autoinhibited VP1-RNA complex to coordinate packaging and genome replication. Once dsRNA synthesis is complete, the polymerase switches to the transcriptional mode, thus providing secondary transcription (By similarity).</text>
</comment>
<comment type="catalytic activity">
    <reaction evidence="2">
        <text>RNA(n) + a ribonucleoside 5'-triphosphate = RNA(n+1) + diphosphate</text>
        <dbReference type="Rhea" id="RHEA:21248"/>
        <dbReference type="Rhea" id="RHEA-COMP:14527"/>
        <dbReference type="Rhea" id="RHEA-COMP:17342"/>
        <dbReference type="ChEBI" id="CHEBI:33019"/>
        <dbReference type="ChEBI" id="CHEBI:61557"/>
        <dbReference type="ChEBI" id="CHEBI:140395"/>
        <dbReference type="EC" id="2.7.7.48"/>
    </reaction>
</comment>
<comment type="cofactor">
    <cofactor evidence="3">
        <name>Mg(2+)</name>
        <dbReference type="ChEBI" id="CHEBI:18420"/>
    </cofactor>
</comment>
<comment type="subunit">
    <text evidence="1 3">Interacts with VP3 (Potential). Interacts with VP2; this interaction activates VP1. Interacts with NSP5; this interaction is probably necessary for the formation of functional virus factories. Interacts with NSP2; this interaction is weak (By similarity).</text>
</comment>
<comment type="subcellular location">
    <subcellularLocation>
        <location evidence="3">Virion</location>
    </subcellularLocation>
    <text evidence="1">Attached inside the inner capsid as a minor component. Also found in spherical cytoplasmic structures, called virus factories, that appear early after infection and are the site of viral replication and packaging (By similarity).</text>
</comment>
<comment type="similarity">
    <text evidence="3">Belongs to the reoviridae RNA-directed RNA polymerase family.</text>
</comment>
<organism>
    <name type="scientific">Rotavirus A (strain RVA/Cow/United States/NCDV-Lincoln/1969/G6P6[1])</name>
    <name type="common">RV-A</name>
    <name type="synonym">Rotavirus A (strain Nebraska calf diarrhea virus)</name>
    <dbReference type="NCBI Taxonomy" id="36439"/>
    <lineage>
        <taxon>Viruses</taxon>
        <taxon>Riboviria</taxon>
        <taxon>Orthornavirae</taxon>
        <taxon>Duplornaviricota</taxon>
        <taxon>Resentoviricetes</taxon>
        <taxon>Reovirales</taxon>
        <taxon>Sedoreoviridae</taxon>
        <taxon>Rotavirus</taxon>
        <taxon>Rotavirus A</taxon>
    </lineage>
</organism>
<evidence type="ECO:0000250" key="1"/>
<evidence type="ECO:0000255" key="2">
    <source>
        <dbReference type="PROSITE-ProRule" id="PRU00539"/>
    </source>
</evidence>
<evidence type="ECO:0000305" key="3"/>
<sequence length="1088" mass="125096">MGKYNLILSEYLSFIYNSQSAVQIPIYYSSNSELENRCIEFHSKCLENSKNGLSLKKLFAEYSDVIENATLLSILSYSYDKYNAVERKLVKYAKSKPLEADLTVNELDYENNKITSELFPTAEEYTDSLMDPAILTSLSSNLNAVMFWLEKHENDVAEKLKIYKRRLDLFTIVASTVNKYGVPRHNAKYRYEYEVMKDKPYYLVTWANSSIEMLMSVFSHEDYLIARELIVLSYSNRSTLAKLVSSPMSILVALVDINGTFITNEELELEFSNKYVRAIVPDQTFDELKQMLDNMRKAGLTDIPKMIQDWLVDCSIEKFPLMAKIYSWSFHVGFRKQKMLDAALDQLKTEYTEDVDDEMYREYTMLIRDEVVKMLEEPVKHDDHLLQDSELAGLLSMSSASNGESRQLKFGRKTIFSTKKNMHVMDDMANGRYTPGIIPPVNVNKPIPLGRRDVPGRRTRIIFILPYEYFIAQHAVVEKMLIYAKHTREYAEFYSQSNQLLSYGDVTRFLSNNSMVLYTDVSQWDSSQHNTQPFRKGIIMGLDMLANMTNDARVIQTLNLYKQTQINLMDSYVQIPDGNVIKKIQYGAVASGEKQTKAANSIANLALIKTVLSRISNKYSFATKIIRVDGDDNYAVLQFNTEVTKQMVQDVSNDVRETYARMNAKVKALVSTVGIEIAKRYIAGGKIFFRAGINLLNNEKRGQSTQWDQAAVLYSNYIVNRLRGFETDREFILTKIMQMTSVAITGSLRLFPSERVLTTNSTFKVFDSEDFIIEYGTTDDEVYIQRAFMSLSSQKSGIADEIAASSTFKNYVSRLSEQLLFSKNNIVSRGIALTEKAKLNSYAPISLEKRRAQISALLTMLQKPVTFKSSKITINDILRDIKPFFTVSEAHLSIQYQKFMPTLPDNVQYIIQCIGSRTYQIEDDGSKSAISRLISKYSVYRPSIEELYKVISLHENEIQLYLISLGIPKIDADTYVGSKIYSQDKYRILESYVYNLLSINYGCYQLFDFNSPDLEKLIRIPFKGKIPAVTFILHLYAKLEVINHAIKNGSWISLFCNYPKSEMIKLWKKMWNITSLRSPYTNANFFQD</sequence>
<keyword id="KW-0460">Magnesium</keyword>
<keyword id="KW-0547">Nucleotide-binding</keyword>
<keyword id="KW-0548">Nucleotidyltransferase</keyword>
<keyword id="KW-0694">RNA-binding</keyword>
<keyword id="KW-0696">RNA-directed RNA polymerase</keyword>
<keyword id="KW-0808">Transferase</keyword>
<keyword id="KW-0693">Viral RNA replication</keyword>
<keyword id="KW-0946">Virion</keyword>
<proteinExistence type="inferred from homology"/>
<name>RDRP_ROTBN</name>
<organismHost>
    <name type="scientific">Bos taurus</name>
    <name type="common">Bovine</name>
    <dbReference type="NCBI Taxonomy" id="9913"/>
</organismHost>
<accession>A7J398</accession>
<dbReference type="EC" id="2.7.7.48"/>
<dbReference type="EMBL" id="DQ870493">
    <property type="protein sequence ID" value="ABI60860.1"/>
    <property type="molecule type" value="Genomic_RNA"/>
</dbReference>
<dbReference type="SMR" id="A7J398"/>
<dbReference type="GO" id="GO:0044423">
    <property type="term" value="C:virion component"/>
    <property type="evidence" value="ECO:0007669"/>
    <property type="project" value="UniProtKB-KW"/>
</dbReference>
<dbReference type="GO" id="GO:0000166">
    <property type="term" value="F:nucleotide binding"/>
    <property type="evidence" value="ECO:0007669"/>
    <property type="project" value="UniProtKB-KW"/>
</dbReference>
<dbReference type="GO" id="GO:0003723">
    <property type="term" value="F:RNA binding"/>
    <property type="evidence" value="ECO:0007669"/>
    <property type="project" value="UniProtKB-KW"/>
</dbReference>
<dbReference type="GO" id="GO:0003968">
    <property type="term" value="F:RNA-directed RNA polymerase activity"/>
    <property type="evidence" value="ECO:0007669"/>
    <property type="project" value="UniProtKB-KW"/>
</dbReference>
<dbReference type="GO" id="GO:0006351">
    <property type="term" value="P:DNA-templated transcription"/>
    <property type="evidence" value="ECO:0007669"/>
    <property type="project" value="InterPro"/>
</dbReference>
<dbReference type="GO" id="GO:0019079">
    <property type="term" value="P:viral genome replication"/>
    <property type="evidence" value="ECO:0007669"/>
    <property type="project" value="InterPro"/>
</dbReference>
<dbReference type="Gene3D" id="1.10.357.80">
    <property type="match status" value="2"/>
</dbReference>
<dbReference type="Gene3D" id="1.20.120.1390">
    <property type="match status" value="1"/>
</dbReference>
<dbReference type="Gene3D" id="3.30.230.140">
    <property type="match status" value="2"/>
</dbReference>
<dbReference type="Gene3D" id="3.30.70.2480">
    <property type="match status" value="1"/>
</dbReference>
<dbReference type="Gene3D" id="1.10.10.1990">
    <property type="entry name" value="Viral RNA-directed RNA polymerase, 4-helical domain"/>
    <property type="match status" value="1"/>
</dbReference>
<dbReference type="InterPro" id="IPR043502">
    <property type="entry name" value="DNA/RNA_pol_sf"/>
</dbReference>
<dbReference type="InterPro" id="IPR042032">
    <property type="entry name" value="RNA-dir_pol_4-hel_dom"/>
</dbReference>
<dbReference type="InterPro" id="IPR001795">
    <property type="entry name" value="RNA-dir_pol_luteovirus"/>
</dbReference>
<dbReference type="InterPro" id="IPR007097">
    <property type="entry name" value="RNA-dir_pol_reovirus"/>
</dbReference>
<dbReference type="InterPro" id="IPR022071">
    <property type="entry name" value="Rotavirus_VP1_C"/>
</dbReference>
<dbReference type="Pfam" id="PF02123">
    <property type="entry name" value="RdRP_4"/>
    <property type="match status" value="1"/>
</dbReference>
<dbReference type="Pfam" id="PF12289">
    <property type="entry name" value="Rotavirus_VP1"/>
    <property type="match status" value="1"/>
</dbReference>
<dbReference type="SUPFAM" id="SSF56672">
    <property type="entry name" value="DNA/RNA polymerases"/>
    <property type="match status" value="1"/>
</dbReference>
<dbReference type="PROSITE" id="PS50523">
    <property type="entry name" value="RDRP_DSRNA_REO"/>
    <property type="match status" value="1"/>
</dbReference>
<protein>
    <recommendedName>
        <fullName>RNA-directed RNA polymerase</fullName>
        <ecNumber>2.7.7.48</ecNumber>
    </recommendedName>
    <alternativeName>
        <fullName>Protein VP1</fullName>
    </alternativeName>
</protein>
<feature type="chain" id="PRO_0000368036" description="RNA-directed RNA polymerase">
    <location>
        <begin position="1"/>
        <end position="1088"/>
    </location>
</feature>
<feature type="domain" description="RdRp catalytic" evidence="2">
    <location>
        <begin position="501"/>
        <end position="687"/>
    </location>
</feature>